<gene>
    <name type="primary">mdh</name>
</gene>
<reference key="1">
    <citation type="journal article" date="1990" name="Arch. Microbiol.">
        <title>Characterization of the malate dehydrogenase from Thermoleophilum album NM.</title>
        <authorList>
            <person name="Novotny J.F. Jr."/>
            <person name="Perry J.J."/>
        </authorList>
    </citation>
    <scope>PROTEIN SEQUENCE</scope>
    <source>
        <strain>NM</strain>
    </source>
</reference>
<name>MDH_THEAL</name>
<proteinExistence type="evidence at protein level"/>
<keyword id="KW-0903">Direct protein sequencing</keyword>
<keyword id="KW-0520">NAD</keyword>
<keyword id="KW-0560">Oxidoreductase</keyword>
<keyword id="KW-0816">Tricarboxylic acid cycle</keyword>
<accession>P33163</accession>
<comment type="function">
    <text evidence="1">Catalyzes the reversible oxidation of malate to oxaloacetate.</text>
</comment>
<comment type="catalytic activity">
    <reaction evidence="2">
        <text>(S)-malate + NAD(+) = oxaloacetate + NADH + H(+)</text>
        <dbReference type="Rhea" id="RHEA:21432"/>
        <dbReference type="ChEBI" id="CHEBI:15378"/>
        <dbReference type="ChEBI" id="CHEBI:15589"/>
        <dbReference type="ChEBI" id="CHEBI:16452"/>
        <dbReference type="ChEBI" id="CHEBI:57540"/>
        <dbReference type="ChEBI" id="CHEBI:57945"/>
        <dbReference type="EC" id="1.1.1.37"/>
    </reaction>
</comment>
<comment type="similarity">
    <text evidence="3">Belongs to the LDH/MDH superfamily. MDH type 2 family.</text>
</comment>
<sequence>MSILPLVHAMANVRGDIEYLTEA</sequence>
<organism>
    <name type="scientific">Thermoleophilum album</name>
    <dbReference type="NCBI Taxonomy" id="29539"/>
    <lineage>
        <taxon>Bacteria</taxon>
        <taxon>Bacillati</taxon>
        <taxon>Actinomycetota</taxon>
        <taxon>Thermoleophilia</taxon>
        <taxon>Thermoleophilales</taxon>
        <taxon>Thermoleophilaceae</taxon>
        <taxon>Thermoleophilum</taxon>
    </lineage>
</organism>
<protein>
    <recommendedName>
        <fullName>Malate dehydrogenase</fullName>
        <ecNumber>1.1.1.37</ecNumber>
    </recommendedName>
</protein>
<evidence type="ECO:0000250" key="1"/>
<evidence type="ECO:0000255" key="2">
    <source>
        <dbReference type="PROSITE-ProRule" id="PRU10004"/>
    </source>
</evidence>
<evidence type="ECO:0000305" key="3"/>
<feature type="chain" id="PRO_0000113397" description="Malate dehydrogenase">
    <location>
        <begin position="1"/>
        <end position="23" status="greater than"/>
    </location>
</feature>
<feature type="non-terminal residue">
    <location>
        <position position="23"/>
    </location>
</feature>
<dbReference type="EC" id="1.1.1.37"/>
<dbReference type="PIR" id="A60689">
    <property type="entry name" value="A60689"/>
</dbReference>
<dbReference type="STRING" id="29539.SAMN02745716_2056"/>
<dbReference type="GO" id="GO:0030060">
    <property type="term" value="F:L-malate dehydrogenase (NAD+) activity"/>
    <property type="evidence" value="ECO:0007669"/>
    <property type="project" value="UniProtKB-EC"/>
</dbReference>
<dbReference type="GO" id="GO:0006099">
    <property type="term" value="P:tricarboxylic acid cycle"/>
    <property type="evidence" value="ECO:0007669"/>
    <property type="project" value="UniProtKB-KW"/>
</dbReference>